<sequence>MISTSEFKKGLKIEYKGEPYEIIDFQHVKMQQRAPIVRTKIKHLKTGRVLEENFPAGEKFEKPELEEKQMQYLYSQGDSYVFMDMESYEQISIPKERIGDAIYYIKDEMIVDVIYYKGEPLVIEPPMFVELRVAETEPAFKGDTASGGTKPAKLETGLTVKVPFHIQTGDLLKIDTRTGEYIEKVKE</sequence>
<reference key="1">
    <citation type="submission" date="2008-08" db="EMBL/GenBank/DDBJ databases">
        <title>The complete genome sequence of Thermodesulfovibrio yellowstonii strain ATCC 51303 / DSM 11347 / YP87.</title>
        <authorList>
            <person name="Dodson R.J."/>
            <person name="Durkin A.S."/>
            <person name="Wu M."/>
            <person name="Eisen J."/>
            <person name="Sutton G."/>
        </authorList>
    </citation>
    <scope>NUCLEOTIDE SEQUENCE [LARGE SCALE GENOMIC DNA]</scope>
    <source>
        <strain>ATCC 51303 / DSM 11347 / YP87</strain>
    </source>
</reference>
<organism>
    <name type="scientific">Thermodesulfovibrio yellowstonii (strain ATCC 51303 / DSM 11347 / YP87)</name>
    <dbReference type="NCBI Taxonomy" id="289376"/>
    <lineage>
        <taxon>Bacteria</taxon>
        <taxon>Pseudomonadati</taxon>
        <taxon>Nitrospirota</taxon>
        <taxon>Thermodesulfovibrionia</taxon>
        <taxon>Thermodesulfovibrionales</taxon>
        <taxon>Thermodesulfovibrionaceae</taxon>
        <taxon>Thermodesulfovibrio</taxon>
    </lineage>
</organism>
<comment type="function">
    <text evidence="1">Involved in peptide bond synthesis. Stimulates efficient translation and peptide-bond synthesis on native or reconstituted 70S ribosomes in vitro. Probably functions indirectly by altering the affinity of the ribosome for aminoacyl-tRNA, thus increasing their reactivity as acceptors for peptidyl transferase.</text>
</comment>
<comment type="pathway">
    <text evidence="1">Protein biosynthesis; polypeptide chain elongation.</text>
</comment>
<comment type="subcellular location">
    <subcellularLocation>
        <location evidence="1">Cytoplasm</location>
    </subcellularLocation>
</comment>
<comment type="similarity">
    <text evidence="1">Belongs to the elongation factor P family.</text>
</comment>
<protein>
    <recommendedName>
        <fullName evidence="1">Elongation factor P</fullName>
        <shortName evidence="1">EF-P</shortName>
    </recommendedName>
</protein>
<evidence type="ECO:0000255" key="1">
    <source>
        <dbReference type="HAMAP-Rule" id="MF_00141"/>
    </source>
</evidence>
<keyword id="KW-0963">Cytoplasm</keyword>
<keyword id="KW-0251">Elongation factor</keyword>
<keyword id="KW-0648">Protein biosynthesis</keyword>
<keyword id="KW-1185">Reference proteome</keyword>
<feature type="chain" id="PRO_1000117907" description="Elongation factor P">
    <location>
        <begin position="1"/>
        <end position="187"/>
    </location>
</feature>
<dbReference type="EMBL" id="CP001147">
    <property type="protein sequence ID" value="ACI20602.1"/>
    <property type="molecule type" value="Genomic_DNA"/>
</dbReference>
<dbReference type="RefSeq" id="WP_012545338.1">
    <property type="nucleotide sequence ID" value="NC_011296.1"/>
</dbReference>
<dbReference type="RefSeq" id="YP_002248247.1">
    <property type="nucleotide sequence ID" value="NC_011296.1"/>
</dbReference>
<dbReference type="SMR" id="B5YJ32"/>
<dbReference type="FunCoup" id="B5YJ32">
    <property type="interactions" value="459"/>
</dbReference>
<dbReference type="STRING" id="289376.THEYE_A0400"/>
<dbReference type="EnsemblBacteria" id="ACI20602">
    <property type="protein sequence ID" value="ACI20602"/>
    <property type="gene ID" value="THEYE_A0400"/>
</dbReference>
<dbReference type="KEGG" id="tye:THEYE_A0400"/>
<dbReference type="PATRIC" id="fig|289376.4.peg.395"/>
<dbReference type="eggNOG" id="COG0231">
    <property type="taxonomic scope" value="Bacteria"/>
</dbReference>
<dbReference type="HOGENOM" id="CLU_074944_0_1_0"/>
<dbReference type="InParanoid" id="B5YJ32"/>
<dbReference type="OrthoDB" id="9801844at2"/>
<dbReference type="UniPathway" id="UPA00345"/>
<dbReference type="Proteomes" id="UP000000718">
    <property type="component" value="Chromosome"/>
</dbReference>
<dbReference type="GO" id="GO:0005737">
    <property type="term" value="C:cytoplasm"/>
    <property type="evidence" value="ECO:0000318"/>
    <property type="project" value="GO_Central"/>
</dbReference>
<dbReference type="GO" id="GO:0003746">
    <property type="term" value="F:translation elongation factor activity"/>
    <property type="evidence" value="ECO:0000318"/>
    <property type="project" value="GO_Central"/>
</dbReference>
<dbReference type="GO" id="GO:0043043">
    <property type="term" value="P:peptide biosynthetic process"/>
    <property type="evidence" value="ECO:0007669"/>
    <property type="project" value="InterPro"/>
</dbReference>
<dbReference type="CDD" id="cd04470">
    <property type="entry name" value="S1_EF-P_repeat_1"/>
    <property type="match status" value="1"/>
</dbReference>
<dbReference type="CDD" id="cd05794">
    <property type="entry name" value="S1_EF-P_repeat_2"/>
    <property type="match status" value="1"/>
</dbReference>
<dbReference type="FunFam" id="2.30.30.30:FF:000003">
    <property type="entry name" value="Elongation factor P"/>
    <property type="match status" value="1"/>
</dbReference>
<dbReference type="FunFam" id="2.40.50.140:FF:000004">
    <property type="entry name" value="Elongation factor P"/>
    <property type="match status" value="1"/>
</dbReference>
<dbReference type="FunFam" id="2.40.50.140:FF:000009">
    <property type="entry name" value="Elongation factor P"/>
    <property type="match status" value="1"/>
</dbReference>
<dbReference type="Gene3D" id="2.30.30.30">
    <property type="match status" value="1"/>
</dbReference>
<dbReference type="Gene3D" id="2.40.50.140">
    <property type="entry name" value="Nucleic acid-binding proteins"/>
    <property type="match status" value="2"/>
</dbReference>
<dbReference type="HAMAP" id="MF_00141">
    <property type="entry name" value="EF_P"/>
    <property type="match status" value="1"/>
</dbReference>
<dbReference type="InterPro" id="IPR015365">
    <property type="entry name" value="Elong-fact-P_C"/>
</dbReference>
<dbReference type="InterPro" id="IPR012340">
    <property type="entry name" value="NA-bd_OB-fold"/>
</dbReference>
<dbReference type="InterPro" id="IPR014722">
    <property type="entry name" value="Rib_uL2_dom2"/>
</dbReference>
<dbReference type="InterPro" id="IPR020599">
    <property type="entry name" value="Transl_elong_fac_P/YeiP"/>
</dbReference>
<dbReference type="InterPro" id="IPR013185">
    <property type="entry name" value="Transl_elong_KOW-like"/>
</dbReference>
<dbReference type="InterPro" id="IPR001059">
    <property type="entry name" value="Transl_elong_P/YeiP_cen"/>
</dbReference>
<dbReference type="InterPro" id="IPR013852">
    <property type="entry name" value="Transl_elong_P/YeiP_CS"/>
</dbReference>
<dbReference type="InterPro" id="IPR011768">
    <property type="entry name" value="Transl_elongation_fac_P"/>
</dbReference>
<dbReference type="InterPro" id="IPR008991">
    <property type="entry name" value="Translation_prot_SH3-like_sf"/>
</dbReference>
<dbReference type="NCBIfam" id="TIGR00038">
    <property type="entry name" value="efp"/>
    <property type="match status" value="1"/>
</dbReference>
<dbReference type="NCBIfam" id="NF001810">
    <property type="entry name" value="PRK00529.1"/>
    <property type="match status" value="1"/>
</dbReference>
<dbReference type="PANTHER" id="PTHR30053">
    <property type="entry name" value="ELONGATION FACTOR P"/>
    <property type="match status" value="1"/>
</dbReference>
<dbReference type="PANTHER" id="PTHR30053:SF12">
    <property type="entry name" value="ELONGATION FACTOR P (EF-P) FAMILY PROTEIN"/>
    <property type="match status" value="1"/>
</dbReference>
<dbReference type="Pfam" id="PF01132">
    <property type="entry name" value="EFP"/>
    <property type="match status" value="1"/>
</dbReference>
<dbReference type="Pfam" id="PF08207">
    <property type="entry name" value="EFP_N"/>
    <property type="match status" value="1"/>
</dbReference>
<dbReference type="Pfam" id="PF09285">
    <property type="entry name" value="Elong-fact-P_C"/>
    <property type="match status" value="1"/>
</dbReference>
<dbReference type="PIRSF" id="PIRSF005901">
    <property type="entry name" value="EF-P"/>
    <property type="match status" value="1"/>
</dbReference>
<dbReference type="SMART" id="SM01185">
    <property type="entry name" value="EFP"/>
    <property type="match status" value="1"/>
</dbReference>
<dbReference type="SMART" id="SM00841">
    <property type="entry name" value="Elong-fact-P_C"/>
    <property type="match status" value="1"/>
</dbReference>
<dbReference type="SUPFAM" id="SSF50249">
    <property type="entry name" value="Nucleic acid-binding proteins"/>
    <property type="match status" value="2"/>
</dbReference>
<dbReference type="SUPFAM" id="SSF50104">
    <property type="entry name" value="Translation proteins SH3-like domain"/>
    <property type="match status" value="1"/>
</dbReference>
<dbReference type="PROSITE" id="PS01275">
    <property type="entry name" value="EFP"/>
    <property type="match status" value="1"/>
</dbReference>
<name>EFP_THEYD</name>
<accession>B5YJ32</accession>
<gene>
    <name evidence="1" type="primary">efp</name>
    <name type="ordered locus">THEYE_A0400</name>
</gene>
<proteinExistence type="inferred from homology"/>